<sequence length="169" mass="19212">MLNRLESLTQRVGGSNELIDQWLHARKELLVSYCTVIGIKPQKEKHTPLNAKTLENFCHNLVDYLSSGHFHIYDRIIKEVEGASSPKMALTAKIHPALKNNTQTIMAFHDRYTNIEIDDDSCTEYQQALSDIGEALDARFKLEDQLIQWAAESWQAAQLADADKKSQVN</sequence>
<reference key="1">
    <citation type="journal article" date="2004" name="Proc. Natl. Acad. Sci. U.S.A.">
        <title>Insights into the evolution of Yersinia pestis through whole-genome comparison with Yersinia pseudotuberculosis.</title>
        <authorList>
            <person name="Chain P.S.G."/>
            <person name="Carniel E."/>
            <person name="Larimer F.W."/>
            <person name="Lamerdin J."/>
            <person name="Stoutland P.O."/>
            <person name="Regala W.M."/>
            <person name="Georgescu A.M."/>
            <person name="Vergez L.M."/>
            <person name="Land M.L."/>
            <person name="Motin V.L."/>
            <person name="Brubaker R.R."/>
            <person name="Fowler J."/>
            <person name="Hinnebusch J."/>
            <person name="Marceau M."/>
            <person name="Medigue C."/>
            <person name="Simonet M."/>
            <person name="Chenal-Francisque V."/>
            <person name="Souza B."/>
            <person name="Dacheux D."/>
            <person name="Elliott J.M."/>
            <person name="Derbise A."/>
            <person name="Hauser L.J."/>
            <person name="Garcia E."/>
        </authorList>
    </citation>
    <scope>NUCLEOTIDE SEQUENCE [LARGE SCALE GENOMIC DNA]</scope>
    <source>
        <strain>IP32953</strain>
    </source>
</reference>
<accession>Q66FP4</accession>
<gene>
    <name evidence="1" type="primary">rsd</name>
    <name type="ordered locus">YPTB0291</name>
</gene>
<protein>
    <recommendedName>
        <fullName evidence="1">Regulator of sigma D</fullName>
    </recommendedName>
</protein>
<evidence type="ECO:0000255" key="1">
    <source>
        <dbReference type="HAMAP-Rule" id="MF_01181"/>
    </source>
</evidence>
<name>RSD_YERPS</name>
<proteinExistence type="inferred from homology"/>
<organism>
    <name type="scientific">Yersinia pseudotuberculosis serotype I (strain IP32953)</name>
    <dbReference type="NCBI Taxonomy" id="273123"/>
    <lineage>
        <taxon>Bacteria</taxon>
        <taxon>Pseudomonadati</taxon>
        <taxon>Pseudomonadota</taxon>
        <taxon>Gammaproteobacteria</taxon>
        <taxon>Enterobacterales</taxon>
        <taxon>Yersiniaceae</taxon>
        <taxon>Yersinia</taxon>
    </lineage>
</organism>
<dbReference type="EMBL" id="BX936398">
    <property type="protein sequence ID" value="CAH19531.1"/>
    <property type="molecule type" value="Genomic_DNA"/>
</dbReference>
<dbReference type="RefSeq" id="WP_011191553.1">
    <property type="nucleotide sequence ID" value="NC_006155.1"/>
</dbReference>
<dbReference type="SMR" id="Q66FP4"/>
<dbReference type="GeneID" id="49787717"/>
<dbReference type="KEGG" id="ypo:BZ17_2282"/>
<dbReference type="KEGG" id="yps:YPTB0291"/>
<dbReference type="PATRIC" id="fig|273123.14.peg.2413"/>
<dbReference type="Proteomes" id="UP000001011">
    <property type="component" value="Chromosome"/>
</dbReference>
<dbReference type="GO" id="GO:0005737">
    <property type="term" value="C:cytoplasm"/>
    <property type="evidence" value="ECO:0007669"/>
    <property type="project" value="UniProtKB-SubCell"/>
</dbReference>
<dbReference type="GO" id="GO:0006355">
    <property type="term" value="P:regulation of DNA-templated transcription"/>
    <property type="evidence" value="ECO:0007669"/>
    <property type="project" value="InterPro"/>
</dbReference>
<dbReference type="Gene3D" id="1.20.120.1370">
    <property type="entry name" value="Regulator of RNA polymerase sigma(70) subunit, domain 4"/>
    <property type="match status" value="1"/>
</dbReference>
<dbReference type="HAMAP" id="MF_01181">
    <property type="entry name" value="Rsd"/>
    <property type="match status" value="1"/>
</dbReference>
<dbReference type="InterPro" id="IPR038309">
    <property type="entry name" value="Rsd/AlgQ_sf"/>
</dbReference>
<dbReference type="InterPro" id="IPR023785">
    <property type="entry name" value="Sigma70_reg_Rsd"/>
</dbReference>
<dbReference type="InterPro" id="IPR007448">
    <property type="entry name" value="Sigma70_reg_Rsd_AlgQ"/>
</dbReference>
<dbReference type="NCBIfam" id="NF008723">
    <property type="entry name" value="PRK11718.1"/>
    <property type="match status" value="1"/>
</dbReference>
<dbReference type="Pfam" id="PF04353">
    <property type="entry name" value="Rsd_AlgQ"/>
    <property type="match status" value="1"/>
</dbReference>
<dbReference type="PIRSF" id="PIRSF016548">
    <property type="entry name" value="Rsd_AlgQ"/>
    <property type="match status" value="1"/>
</dbReference>
<comment type="function">
    <text evidence="1">Binds RpoD and negatively regulates RpoD-mediated transcription activation by preventing the interaction between the primary sigma factor RpoD with the catalytic core of the RNA polymerase and with promoter DNA. May be involved in replacement of the RNA polymerase sigma subunit from RpoD to RpoS during the transition from exponential growth to the stationary phase.</text>
</comment>
<comment type="subunit">
    <text evidence="1">Interacts with RpoD.</text>
</comment>
<comment type="subcellular location">
    <subcellularLocation>
        <location evidence="1">Cytoplasm</location>
    </subcellularLocation>
</comment>
<comment type="similarity">
    <text evidence="1">Belongs to the Rsd/AlgQ family.</text>
</comment>
<feature type="chain" id="PRO_0000268894" description="Regulator of sigma D">
    <location>
        <begin position="1"/>
        <end position="169"/>
    </location>
</feature>
<keyword id="KW-0963">Cytoplasm</keyword>
<keyword id="KW-0804">Transcription</keyword>
<keyword id="KW-0805">Transcription regulation</keyword>